<accession>A7GVR3</accession>
<comment type="function">
    <text evidence="1">Plays an essential role in the initiation and regulation of chromosomal replication. ATP-DnaA binds to the origin of replication (oriC) to initiate formation of the DNA replication initiation complex once per cell cycle. Binds the DnaA box (a 9 base pair repeat at the origin) and separates the double-stranded (ds)DNA. Forms a right-handed helical filament on oriC DNA; dsDNA binds to the exterior of the filament while single-stranded (ss)DNA is stabiized in the filament's interior. The ATP-DnaA-oriC complex binds and stabilizes one strand of the AT-rich DNA unwinding element (DUE), permitting loading of DNA polymerase. After initiation quickly degrades to an ADP-DnaA complex that is not apt for DNA replication. Binds acidic phospholipids.</text>
</comment>
<comment type="subunit">
    <text evidence="1">Oligomerizes as a right-handed, spiral filament on DNA at oriC.</text>
</comment>
<comment type="subcellular location">
    <subcellularLocation>
        <location evidence="1">Cytoplasm</location>
    </subcellularLocation>
</comment>
<comment type="domain">
    <text evidence="1">Domain I is involved in oligomerization and binding regulators, domain II is flexibile and of varying length in different bacteria, domain III forms the AAA+ region, while domain IV binds dsDNA.</text>
</comment>
<comment type="similarity">
    <text evidence="1">Belongs to the DnaA family.</text>
</comment>
<evidence type="ECO:0000255" key="1">
    <source>
        <dbReference type="HAMAP-Rule" id="MF_00377"/>
    </source>
</evidence>
<name>DNAA_CAMC5</name>
<feature type="chain" id="PRO_1000048626" description="Chromosomal replication initiator protein DnaA">
    <location>
        <begin position="1"/>
        <end position="436"/>
    </location>
</feature>
<feature type="region of interest" description="Domain I, interacts with DnaA modulators" evidence="1">
    <location>
        <begin position="1"/>
        <end position="69"/>
    </location>
</feature>
<feature type="region of interest" description="Domain II" evidence="1">
    <location>
        <begin position="69"/>
        <end position="99"/>
    </location>
</feature>
<feature type="region of interest" description="Domain III, AAA+ region" evidence="1">
    <location>
        <begin position="100"/>
        <end position="314"/>
    </location>
</feature>
<feature type="region of interest" description="Domain IV, binds dsDNA" evidence="1">
    <location>
        <begin position="315"/>
        <end position="436"/>
    </location>
</feature>
<feature type="binding site" evidence="1">
    <location>
        <position position="144"/>
    </location>
    <ligand>
        <name>ATP</name>
        <dbReference type="ChEBI" id="CHEBI:30616"/>
    </ligand>
</feature>
<feature type="binding site" evidence="1">
    <location>
        <position position="146"/>
    </location>
    <ligand>
        <name>ATP</name>
        <dbReference type="ChEBI" id="CHEBI:30616"/>
    </ligand>
</feature>
<feature type="binding site" evidence="1">
    <location>
        <position position="147"/>
    </location>
    <ligand>
        <name>ATP</name>
        <dbReference type="ChEBI" id="CHEBI:30616"/>
    </ligand>
</feature>
<feature type="binding site" evidence="1">
    <location>
        <position position="148"/>
    </location>
    <ligand>
        <name>ATP</name>
        <dbReference type="ChEBI" id="CHEBI:30616"/>
    </ligand>
</feature>
<reference key="1">
    <citation type="submission" date="2007-07" db="EMBL/GenBank/DDBJ databases">
        <title>Genome sequence of Campylobacter curvus 525.92 isolated from human feces.</title>
        <authorList>
            <person name="Fouts D.E."/>
            <person name="Mongodin E.F."/>
            <person name="Puiu D."/>
            <person name="Sebastian Y."/>
            <person name="Miller W.G."/>
            <person name="Mandrell R.E."/>
            <person name="Lastovica A.J."/>
            <person name="Nelson K.E."/>
        </authorList>
    </citation>
    <scope>NUCLEOTIDE SEQUENCE [LARGE SCALE GENOMIC DNA]</scope>
    <source>
        <strain>525.92</strain>
    </source>
</reference>
<gene>
    <name evidence="1" type="primary">dnaA</name>
    <name type="ordered locus">Ccur92_00010</name>
    <name type="ORF">CCV52592_2056</name>
</gene>
<sequence>MLADEVLELLSAEISPNEYEYYIKQLKFNEKASSDETVVFNAPNELIAKFIKTKYATKIAHLFEVKTGTKPNVEITTQTKLKSSKQNQVNIKQIKAQSTLLNPAYTFENFVVGGSNEYAFLSAKAASEQPGKIYNPLFIYGPTGLGKTHLLQSVGNFCLNQGKVVICVTSEQFMTDFTYNINNHSMERFREKYRNCDVLLIDDVQFLGKTDKIQEEFFHTFNELHSKNGQIVMTSDRQPKLLKGFEDRLRTRFEWGIMADITPPELDTKIAIIQKKCEFDKIYLNKDVINYIATNMGDNIREIESAIINLNAYANLMRQEITLDFAKNVMRDLIKEKRENINLENIIEVVSKELNIKPSDIKSKSRVQNIVEARRIVIYLAKMLTTNSMPQIANYFSMKDHSAVSHNIKKINELIENNEIFNLRVSELKNKILTKG</sequence>
<organism>
    <name type="scientific">Campylobacter curvus (strain 525.92)</name>
    <dbReference type="NCBI Taxonomy" id="360105"/>
    <lineage>
        <taxon>Bacteria</taxon>
        <taxon>Pseudomonadati</taxon>
        <taxon>Campylobacterota</taxon>
        <taxon>Epsilonproteobacteria</taxon>
        <taxon>Campylobacterales</taxon>
        <taxon>Campylobacteraceae</taxon>
        <taxon>Campylobacter</taxon>
    </lineage>
</organism>
<keyword id="KW-0067">ATP-binding</keyword>
<keyword id="KW-0963">Cytoplasm</keyword>
<keyword id="KW-0235">DNA replication</keyword>
<keyword id="KW-0238">DNA-binding</keyword>
<keyword id="KW-0446">Lipid-binding</keyword>
<keyword id="KW-0547">Nucleotide-binding</keyword>
<keyword id="KW-1185">Reference proteome</keyword>
<dbReference type="EMBL" id="CP000767">
    <property type="protein sequence ID" value="EAU00865.1"/>
    <property type="molecule type" value="Genomic_DNA"/>
</dbReference>
<dbReference type="RefSeq" id="WP_009649719.1">
    <property type="nucleotide sequence ID" value="NC_009715.2"/>
</dbReference>
<dbReference type="SMR" id="A7GVR3"/>
<dbReference type="STRING" id="360105.CCV52592_2056"/>
<dbReference type="KEGG" id="ccv:CCV52592_2056"/>
<dbReference type="HOGENOM" id="CLU_026910_3_1_7"/>
<dbReference type="OrthoDB" id="9807019at2"/>
<dbReference type="Proteomes" id="UP000006380">
    <property type="component" value="Chromosome"/>
</dbReference>
<dbReference type="GO" id="GO:0005737">
    <property type="term" value="C:cytoplasm"/>
    <property type="evidence" value="ECO:0007669"/>
    <property type="project" value="UniProtKB-SubCell"/>
</dbReference>
<dbReference type="GO" id="GO:0005886">
    <property type="term" value="C:plasma membrane"/>
    <property type="evidence" value="ECO:0007669"/>
    <property type="project" value="TreeGrafter"/>
</dbReference>
<dbReference type="GO" id="GO:0005524">
    <property type="term" value="F:ATP binding"/>
    <property type="evidence" value="ECO:0007669"/>
    <property type="project" value="UniProtKB-UniRule"/>
</dbReference>
<dbReference type="GO" id="GO:0016887">
    <property type="term" value="F:ATP hydrolysis activity"/>
    <property type="evidence" value="ECO:0007669"/>
    <property type="project" value="InterPro"/>
</dbReference>
<dbReference type="GO" id="GO:0003688">
    <property type="term" value="F:DNA replication origin binding"/>
    <property type="evidence" value="ECO:0007669"/>
    <property type="project" value="UniProtKB-UniRule"/>
</dbReference>
<dbReference type="GO" id="GO:0008289">
    <property type="term" value="F:lipid binding"/>
    <property type="evidence" value="ECO:0007669"/>
    <property type="project" value="UniProtKB-KW"/>
</dbReference>
<dbReference type="GO" id="GO:0006270">
    <property type="term" value="P:DNA replication initiation"/>
    <property type="evidence" value="ECO:0007669"/>
    <property type="project" value="UniProtKB-UniRule"/>
</dbReference>
<dbReference type="GO" id="GO:0006275">
    <property type="term" value="P:regulation of DNA replication"/>
    <property type="evidence" value="ECO:0007669"/>
    <property type="project" value="UniProtKB-UniRule"/>
</dbReference>
<dbReference type="CDD" id="cd00009">
    <property type="entry name" value="AAA"/>
    <property type="match status" value="1"/>
</dbReference>
<dbReference type="CDD" id="cd06571">
    <property type="entry name" value="Bac_DnaA_C"/>
    <property type="match status" value="1"/>
</dbReference>
<dbReference type="FunFam" id="3.40.50.300:FF:000668">
    <property type="entry name" value="Chromosomal replication initiator protein DnaA"/>
    <property type="match status" value="1"/>
</dbReference>
<dbReference type="Gene3D" id="1.10.1750.10">
    <property type="match status" value="1"/>
</dbReference>
<dbReference type="Gene3D" id="1.10.8.60">
    <property type="match status" value="1"/>
</dbReference>
<dbReference type="Gene3D" id="3.30.300.180">
    <property type="match status" value="1"/>
</dbReference>
<dbReference type="Gene3D" id="3.40.50.300">
    <property type="entry name" value="P-loop containing nucleotide triphosphate hydrolases"/>
    <property type="match status" value="1"/>
</dbReference>
<dbReference type="HAMAP" id="MF_00377">
    <property type="entry name" value="DnaA_bact"/>
    <property type="match status" value="1"/>
</dbReference>
<dbReference type="InterPro" id="IPR003593">
    <property type="entry name" value="AAA+_ATPase"/>
</dbReference>
<dbReference type="InterPro" id="IPR001957">
    <property type="entry name" value="Chromosome_initiator_DnaA"/>
</dbReference>
<dbReference type="InterPro" id="IPR020591">
    <property type="entry name" value="Chromosome_initiator_DnaA-like"/>
</dbReference>
<dbReference type="InterPro" id="IPR018312">
    <property type="entry name" value="Chromosome_initiator_DnaA_CS"/>
</dbReference>
<dbReference type="InterPro" id="IPR013159">
    <property type="entry name" value="DnaA_C"/>
</dbReference>
<dbReference type="InterPro" id="IPR013317">
    <property type="entry name" value="DnaA_dom"/>
</dbReference>
<dbReference type="InterPro" id="IPR024633">
    <property type="entry name" value="DnaA_N_dom"/>
</dbReference>
<dbReference type="InterPro" id="IPR038454">
    <property type="entry name" value="DnaA_N_sf"/>
</dbReference>
<dbReference type="InterPro" id="IPR027417">
    <property type="entry name" value="P-loop_NTPase"/>
</dbReference>
<dbReference type="InterPro" id="IPR010921">
    <property type="entry name" value="Trp_repressor/repl_initiator"/>
</dbReference>
<dbReference type="NCBIfam" id="TIGR00362">
    <property type="entry name" value="DnaA"/>
    <property type="match status" value="1"/>
</dbReference>
<dbReference type="PANTHER" id="PTHR30050">
    <property type="entry name" value="CHROMOSOMAL REPLICATION INITIATOR PROTEIN DNAA"/>
    <property type="match status" value="1"/>
</dbReference>
<dbReference type="PANTHER" id="PTHR30050:SF2">
    <property type="entry name" value="CHROMOSOMAL REPLICATION INITIATOR PROTEIN DNAA"/>
    <property type="match status" value="1"/>
</dbReference>
<dbReference type="Pfam" id="PF00308">
    <property type="entry name" value="Bac_DnaA"/>
    <property type="match status" value="1"/>
</dbReference>
<dbReference type="Pfam" id="PF08299">
    <property type="entry name" value="Bac_DnaA_C"/>
    <property type="match status" value="1"/>
</dbReference>
<dbReference type="Pfam" id="PF11638">
    <property type="entry name" value="DnaA_N"/>
    <property type="match status" value="1"/>
</dbReference>
<dbReference type="PRINTS" id="PR00051">
    <property type="entry name" value="DNAA"/>
</dbReference>
<dbReference type="SMART" id="SM00382">
    <property type="entry name" value="AAA"/>
    <property type="match status" value="1"/>
</dbReference>
<dbReference type="SMART" id="SM00760">
    <property type="entry name" value="Bac_DnaA_C"/>
    <property type="match status" value="1"/>
</dbReference>
<dbReference type="SUPFAM" id="SSF52540">
    <property type="entry name" value="P-loop containing nucleoside triphosphate hydrolases"/>
    <property type="match status" value="1"/>
</dbReference>
<dbReference type="SUPFAM" id="SSF48295">
    <property type="entry name" value="TrpR-like"/>
    <property type="match status" value="1"/>
</dbReference>
<dbReference type="PROSITE" id="PS01008">
    <property type="entry name" value="DNAA"/>
    <property type="match status" value="1"/>
</dbReference>
<proteinExistence type="inferred from homology"/>
<protein>
    <recommendedName>
        <fullName evidence="1">Chromosomal replication initiator protein DnaA</fullName>
    </recommendedName>
</protein>